<accession>Q5SJX8</accession>
<dbReference type="EC" id="5.1.1.-" evidence="3"/>
<dbReference type="EC" id="4.2.1.113" evidence="3"/>
<dbReference type="EMBL" id="AP008226">
    <property type="protein sequence ID" value="BAD70697.1"/>
    <property type="molecule type" value="Genomic_DNA"/>
</dbReference>
<dbReference type="RefSeq" id="YP_144140.1">
    <property type="nucleotide sequence ID" value="NC_006461.1"/>
</dbReference>
<dbReference type="PDB" id="2ZC8">
    <property type="method" value="X-ray"/>
    <property type="resolution" value="1.95 A"/>
    <property type="chains" value="A/B=1-369"/>
</dbReference>
<dbReference type="PDBsum" id="2ZC8"/>
<dbReference type="SMR" id="Q5SJX8"/>
<dbReference type="EnsemblBacteria" id="BAD70697">
    <property type="protein sequence ID" value="BAD70697"/>
    <property type="gene ID" value="BAD70697"/>
</dbReference>
<dbReference type="GeneID" id="3168423"/>
<dbReference type="KEGG" id="ttj:TTHA0874"/>
<dbReference type="PATRIC" id="fig|300852.9.peg.867"/>
<dbReference type="eggNOG" id="COG4948">
    <property type="taxonomic scope" value="Bacteria"/>
</dbReference>
<dbReference type="HOGENOM" id="CLU_030273_4_4_0"/>
<dbReference type="PhylomeDB" id="Q5SJX8"/>
<dbReference type="EvolutionaryTrace" id="Q5SJX8"/>
<dbReference type="Proteomes" id="UP000000532">
    <property type="component" value="Chromosome"/>
</dbReference>
<dbReference type="GO" id="GO:0016853">
    <property type="term" value="F:isomerase activity"/>
    <property type="evidence" value="ECO:0007669"/>
    <property type="project" value="UniProtKB-KW"/>
</dbReference>
<dbReference type="GO" id="GO:0046872">
    <property type="term" value="F:metal ion binding"/>
    <property type="evidence" value="ECO:0007669"/>
    <property type="project" value="UniProtKB-KW"/>
</dbReference>
<dbReference type="GO" id="GO:0043748">
    <property type="term" value="F:O-succinylbenzoate synthase activity"/>
    <property type="evidence" value="ECO:0007669"/>
    <property type="project" value="UniProtKB-EC"/>
</dbReference>
<dbReference type="GO" id="GO:0009234">
    <property type="term" value="P:menaquinone biosynthetic process"/>
    <property type="evidence" value="ECO:0007669"/>
    <property type="project" value="InterPro"/>
</dbReference>
<dbReference type="CDD" id="cd03317">
    <property type="entry name" value="NAAAR"/>
    <property type="match status" value="1"/>
</dbReference>
<dbReference type="Gene3D" id="3.20.20.120">
    <property type="entry name" value="Enolase-like C-terminal domain"/>
    <property type="match status" value="1"/>
</dbReference>
<dbReference type="Gene3D" id="3.30.390.10">
    <property type="entry name" value="Enolase-like, N-terminal domain"/>
    <property type="match status" value="1"/>
</dbReference>
<dbReference type="InterPro" id="IPR036849">
    <property type="entry name" value="Enolase-like_C_sf"/>
</dbReference>
<dbReference type="InterPro" id="IPR029017">
    <property type="entry name" value="Enolase-like_N"/>
</dbReference>
<dbReference type="InterPro" id="IPR029065">
    <property type="entry name" value="Enolase_C-like"/>
</dbReference>
<dbReference type="InterPro" id="IPR013342">
    <property type="entry name" value="Mandelate_racemase_C"/>
</dbReference>
<dbReference type="InterPro" id="IPR013341">
    <property type="entry name" value="Mandelate_racemase_N_dom"/>
</dbReference>
<dbReference type="InterPro" id="IPR010197">
    <property type="entry name" value="OSBS/NAAAR"/>
</dbReference>
<dbReference type="NCBIfam" id="TIGR01928">
    <property type="entry name" value="menC_lowGC_arch"/>
    <property type="match status" value="1"/>
</dbReference>
<dbReference type="PANTHER" id="PTHR48073:SF5">
    <property type="entry name" value="O-SUCCINYLBENZOATE SYNTHASE"/>
    <property type="match status" value="1"/>
</dbReference>
<dbReference type="PANTHER" id="PTHR48073">
    <property type="entry name" value="O-SUCCINYLBENZOATE SYNTHASE-RELATED"/>
    <property type="match status" value="1"/>
</dbReference>
<dbReference type="Pfam" id="PF13378">
    <property type="entry name" value="MR_MLE_C"/>
    <property type="match status" value="1"/>
</dbReference>
<dbReference type="Pfam" id="PF02746">
    <property type="entry name" value="MR_MLE_N"/>
    <property type="match status" value="1"/>
</dbReference>
<dbReference type="SFLD" id="SFLDS00001">
    <property type="entry name" value="Enolase"/>
    <property type="match status" value="1"/>
</dbReference>
<dbReference type="SFLD" id="SFLDF00116">
    <property type="entry name" value="N-succinylamino_acid_racemase"/>
    <property type="match status" value="1"/>
</dbReference>
<dbReference type="SFLD" id="SFLDF00009">
    <property type="entry name" value="o-succinylbenzoate_synthase"/>
    <property type="match status" value="1"/>
</dbReference>
<dbReference type="SMART" id="SM00922">
    <property type="entry name" value="MR_MLE"/>
    <property type="match status" value="1"/>
</dbReference>
<dbReference type="SUPFAM" id="SSF51604">
    <property type="entry name" value="Enolase C-terminal domain-like"/>
    <property type="match status" value="1"/>
</dbReference>
<dbReference type="SUPFAM" id="SSF54826">
    <property type="entry name" value="Enolase N-terminal domain-like"/>
    <property type="match status" value="1"/>
</dbReference>
<name>NSAR_THET8</name>
<protein>
    <recommendedName>
        <fullName evidence="5">N-succinylamino acid racemase</fullName>
        <shortName evidence="5">NSAR</shortName>
        <ecNumber evidence="3">5.1.1.-</ecNumber>
    </recommendedName>
    <alternativeName>
        <fullName evidence="4">N-acylamino acid racemase</fullName>
        <shortName evidence="4">NAAAR</shortName>
    </alternativeName>
    <alternativeName>
        <fullName evidence="5">o-succinylbenzoate synthase</fullName>
        <shortName evidence="6">OSB synthase</shortName>
        <shortName evidence="5">OSBS</shortName>
        <ecNumber evidence="3">4.2.1.113</ecNumber>
    </alternativeName>
</protein>
<organism>
    <name type="scientific">Thermus thermophilus (strain ATCC 27634 / DSM 579 / HB8)</name>
    <dbReference type="NCBI Taxonomy" id="300852"/>
    <lineage>
        <taxon>Bacteria</taxon>
        <taxon>Thermotogati</taxon>
        <taxon>Deinococcota</taxon>
        <taxon>Deinococci</taxon>
        <taxon>Thermales</taxon>
        <taxon>Thermaceae</taxon>
        <taxon>Thermus</taxon>
    </lineage>
</organism>
<sequence>MRIEAAELRILELPLKFRFETSFGVQTKRTILLLRLFGEGLEGLGEGVMERLPLYREETVAGARYLLEEVFLPRVLGRDLPNPEALREALAPFRGNPMAKAVLEMAFFDLWAKALGRPLWQVLGGVRQAVEVGVSLGIQPSVEDTLRVVERHLEEGYRRIKLKIKPGWDYEVLKAVREAFPEATLTADANSAYSLANLAQLKRLDELRLDYIEQPLAYDDLLDHAKLQRELSTPICLDESLTGAEKARKAIELGAGRVFNVKPARLGGHGESLRVHALAESAGIPLWMGGMLEAGVGRAHNLHLATLPGFTKPGDVSSASRYWEEDIVEEALEAKDGLMPVPEGVGIGVHLKLPFVERVTLWQRYMSAS</sequence>
<evidence type="ECO:0000250" key="1">
    <source>
        <dbReference type="UniProtKB" id="Q44244"/>
    </source>
</evidence>
<evidence type="ECO:0000269" key="2">
    <source>
    </source>
</evidence>
<evidence type="ECO:0000269" key="3">
    <source>
    </source>
</evidence>
<evidence type="ECO:0000303" key="4">
    <source>
    </source>
</evidence>
<evidence type="ECO:0000303" key="5">
    <source>
    </source>
</evidence>
<evidence type="ECO:0000305" key="6"/>
<evidence type="ECO:0000305" key="7">
    <source>
    </source>
</evidence>
<evidence type="ECO:0000312" key="8">
    <source>
        <dbReference type="EMBL" id="BAD70697.1"/>
    </source>
</evidence>
<evidence type="ECO:0007744" key="9">
    <source>
        <dbReference type="PDB" id="2ZC8"/>
    </source>
</evidence>
<evidence type="ECO:0007829" key="10">
    <source>
        <dbReference type="PDB" id="2ZC8"/>
    </source>
</evidence>
<gene>
    <name evidence="8" type="ordered locus">TTHA0874</name>
</gene>
<proteinExistence type="evidence at protein level"/>
<feature type="chain" id="PRO_0000455104" description="N-succinylamino acid racemase">
    <location>
        <begin position="1"/>
        <end position="369"/>
    </location>
</feature>
<feature type="active site" description="Proton donor" evidence="1">
    <location>
        <position position="163"/>
    </location>
</feature>
<feature type="active site" description="Proton acceptor" evidence="1">
    <location>
        <position position="262"/>
    </location>
</feature>
<feature type="binding site" evidence="1">
    <location>
        <position position="188"/>
    </location>
    <ligand>
        <name>Mg(2+)</name>
        <dbReference type="ChEBI" id="CHEBI:18420"/>
    </ligand>
</feature>
<feature type="binding site" evidence="1">
    <location>
        <position position="213"/>
    </location>
    <ligand>
        <name>Mg(2+)</name>
        <dbReference type="ChEBI" id="CHEBI:18420"/>
    </ligand>
</feature>
<feature type="binding site" evidence="1">
    <location>
        <position position="238"/>
    </location>
    <ligand>
        <name>Mg(2+)</name>
        <dbReference type="ChEBI" id="CHEBI:18420"/>
    </ligand>
</feature>
<feature type="strand" evidence="10">
    <location>
        <begin position="5"/>
        <end position="21"/>
    </location>
</feature>
<feature type="strand" evidence="10">
    <location>
        <begin position="24"/>
        <end position="38"/>
    </location>
</feature>
<feature type="strand" evidence="10">
    <location>
        <begin position="41"/>
        <end position="46"/>
    </location>
</feature>
<feature type="strand" evidence="10">
    <location>
        <begin position="50"/>
        <end position="52"/>
    </location>
</feature>
<feature type="strand" evidence="10">
    <location>
        <begin position="54"/>
        <end position="57"/>
    </location>
</feature>
<feature type="helix" evidence="10">
    <location>
        <begin position="60"/>
        <end position="69"/>
    </location>
</feature>
<feature type="helix" evidence="10">
    <location>
        <begin position="71"/>
        <end position="75"/>
    </location>
</feature>
<feature type="helix" evidence="10">
    <location>
        <begin position="83"/>
        <end position="90"/>
    </location>
</feature>
<feature type="helix" evidence="10">
    <location>
        <begin position="97"/>
        <end position="114"/>
    </location>
</feature>
<feature type="helix" evidence="10">
    <location>
        <begin position="119"/>
        <end position="123"/>
    </location>
</feature>
<feature type="strand" evidence="10">
    <location>
        <begin position="128"/>
        <end position="132"/>
    </location>
</feature>
<feature type="strand" evidence="10">
    <location>
        <begin position="134"/>
        <end position="136"/>
    </location>
</feature>
<feature type="helix" evidence="10">
    <location>
        <begin position="142"/>
        <end position="154"/>
    </location>
</feature>
<feature type="strand" evidence="10">
    <location>
        <begin position="160"/>
        <end position="163"/>
    </location>
</feature>
<feature type="helix" evidence="10">
    <location>
        <begin position="170"/>
        <end position="179"/>
    </location>
</feature>
<feature type="strand" evidence="10">
    <location>
        <begin position="185"/>
        <end position="188"/>
    </location>
</feature>
<feature type="helix" evidence="10">
    <location>
        <begin position="195"/>
        <end position="197"/>
    </location>
</feature>
<feature type="helix" evidence="10">
    <location>
        <begin position="198"/>
        <end position="202"/>
    </location>
</feature>
<feature type="helix" evidence="10">
    <location>
        <begin position="203"/>
        <end position="207"/>
    </location>
</feature>
<feature type="helix" evidence="10">
    <location>
        <begin position="222"/>
        <end position="230"/>
    </location>
</feature>
<feature type="strand" evidence="10">
    <location>
        <begin position="235"/>
        <end position="238"/>
    </location>
</feature>
<feature type="helix" evidence="10">
    <location>
        <begin position="244"/>
        <end position="253"/>
    </location>
</feature>
<feature type="strand" evidence="10">
    <location>
        <begin position="257"/>
        <end position="261"/>
    </location>
</feature>
<feature type="helix" evidence="10">
    <location>
        <begin position="263"/>
        <end position="266"/>
    </location>
</feature>
<feature type="helix" evidence="10">
    <location>
        <begin position="269"/>
        <end position="281"/>
    </location>
</feature>
<feature type="strand" evidence="10">
    <location>
        <begin position="286"/>
        <end position="288"/>
    </location>
</feature>
<feature type="helix" evidence="10">
    <location>
        <begin position="295"/>
        <end position="304"/>
    </location>
</feature>
<feature type="helix" evidence="10">
    <location>
        <begin position="319"/>
        <end position="321"/>
    </location>
</feature>
<feature type="strand" evidence="10">
    <location>
        <begin position="323"/>
        <end position="325"/>
    </location>
</feature>
<feature type="strand" evidence="10">
    <location>
        <begin position="327"/>
        <end position="330"/>
    </location>
</feature>
<feature type="strand" evidence="10">
    <location>
        <begin position="338"/>
        <end position="340"/>
    </location>
</feature>
<feature type="strand" evidence="10">
    <location>
        <begin position="344"/>
        <end position="346"/>
    </location>
</feature>
<feature type="helix" evidence="10">
    <location>
        <begin position="353"/>
        <end position="358"/>
    </location>
</feature>
<feature type="strand" evidence="10">
    <location>
        <begin position="360"/>
        <end position="367"/>
    </location>
</feature>
<comment type="function">
    <text evidence="3 7">Acts as a N-succinylamino acid racemase (NSAR) that catalyzes the racemization of N-succinyl-L-phenylglycine (PubMed:24872444). Also converts 2-succinyl-6-hydroxy-2,4-cyclohexadiene-1-carboxylate (SHCHC) to 2-succinylbenzoate (OSB) (PubMed:24872444). Catalyzes both N-succinylamino acid racemization and OSB synthesis at equivalent rates (PubMed:24872444). However, NSAR activity is probably the protein's biological function, because menaquinone biosynthesis genes are missing in this species (Probable).</text>
</comment>
<comment type="catalytic activity">
    <reaction evidence="3">
        <text>(1R,6R)-6-hydroxy-2-succinyl-cyclohexa-2,4-diene-1-carboxylate = 2-succinylbenzoate + H2O</text>
        <dbReference type="Rhea" id="RHEA:10196"/>
        <dbReference type="ChEBI" id="CHEBI:15377"/>
        <dbReference type="ChEBI" id="CHEBI:18325"/>
        <dbReference type="ChEBI" id="CHEBI:58689"/>
        <dbReference type="EC" id="4.2.1.113"/>
    </reaction>
</comment>
<comment type="cofactor">
    <cofactor evidence="3">
        <name>a divalent metal cation</name>
        <dbReference type="ChEBI" id="CHEBI:60240"/>
    </cofactor>
    <text evidence="1">Binds 1 divalent metal cation per subunit.</text>
</comment>
<comment type="biophysicochemical properties">
    <kinetics>
        <KM evidence="3">440 uM for N-succinyl-L-phenylglycine</KM>
        <KM evidence="3">9.4 uM for SHCHC</KM>
        <text evidence="3">kcat is 33 sec(-1) with N-succinyl-L-phenylglycine as substrate (PubMed:24872444). kcat is 6.1 sec(-1) with SHCHC as substrate (PubMed:24872444).</text>
    </kinetics>
</comment>
<comment type="subunit">
    <text evidence="2">Homooctamer. Tetramer of dimers.</text>
</comment>
<comment type="similarity">
    <text evidence="6">Belongs to the mandelate racemase/muconate lactonizing enzyme family. MenC type 2 subfamily.</text>
</comment>
<reference key="1">
    <citation type="submission" date="2004-11" db="EMBL/GenBank/DDBJ databases">
        <title>Complete genome sequence of Thermus thermophilus HB8.</title>
        <authorList>
            <person name="Masui R."/>
            <person name="Kurokawa K."/>
            <person name="Nakagawa N."/>
            <person name="Tokunaga F."/>
            <person name="Koyama Y."/>
            <person name="Shibata T."/>
            <person name="Oshima T."/>
            <person name="Yokoyama S."/>
            <person name="Yasunaga T."/>
            <person name="Kuramitsu S."/>
        </authorList>
    </citation>
    <scope>NUCLEOTIDE SEQUENCE [LARGE SCALE GENOMIC DNA]</scope>
    <source>
        <strain>ATCC 27634 / DSM 579 / HB8</strain>
    </source>
</reference>
<reference key="2">
    <citation type="journal article" date="2006" name="J. Mol. Biol.">
        <title>Evolution of structure and function in the o-succinylbenzoate synthase/N-acylamino acid racemase family of the enolase superfamily.</title>
        <authorList>
            <person name="Glasner M.E."/>
            <person name="Fayazmanesh N."/>
            <person name="Chiang R.A."/>
            <person name="Sakai A."/>
            <person name="Jacobson M.P."/>
            <person name="Gerlt J.A."/>
            <person name="Babbitt P.C."/>
        </authorList>
    </citation>
    <scope>FUNCTION</scope>
    <scope>EVOLUTION OF THE O-SUCCINYLBENZOATE SYNTHASE/N-ACYLAMINO ACID RACEMASE FAMILY</scope>
</reference>
<reference key="3">
    <citation type="journal article" date="2014" name="Proc. Natl. Acad. Sci. U.S.A.">
        <title>Loss of quaternary structure is associated with rapid sequence divergence in the OSBS family.</title>
        <authorList>
            <person name="Odokonyero D."/>
            <person name="Sakai A."/>
            <person name="Patskovsky Y."/>
            <person name="Malashkevich V.N."/>
            <person name="Fedorov A.A."/>
            <person name="Bonanno J.B."/>
            <person name="Fedorov E.V."/>
            <person name="Toro R."/>
            <person name="Agarwal R."/>
            <person name="Wang C."/>
            <person name="Ozerova N.D."/>
            <person name="Yew W.S."/>
            <person name="Sauder J.M."/>
            <person name="Swaminathan S."/>
            <person name="Burley S.K."/>
            <person name="Almo S.C."/>
            <person name="Glasner M.E."/>
        </authorList>
    </citation>
    <scope>FUNCTION</scope>
    <scope>CATALYTIC ACTIVITY</scope>
    <scope>COFACTOR</scope>
    <scope>BIOPHYSICOCHEMICAL PROPERTIES</scope>
</reference>
<reference evidence="9" key="4">
    <citation type="journal article" date="2008" name="Proteins">
        <title>Crystal structure of N-acylamino acid racemase from Thermus thermophilus HB8.</title>
        <authorList>
            <person name="Hayashida M."/>
            <person name="Kim S.H."/>
            <person name="Takeda K."/>
            <person name="Hisano T."/>
            <person name="Miki K."/>
        </authorList>
    </citation>
    <scope>X-RAY CRYSTALLOGRAPHY (1.95 ANGSTROMS)</scope>
    <scope>SUBUNIT</scope>
    <source>
        <strain>ATCC 27634 / DSM 579 / HB8</strain>
    </source>
</reference>
<keyword id="KW-0002">3D-structure</keyword>
<keyword id="KW-0413">Isomerase</keyword>
<keyword id="KW-0456">Lyase</keyword>
<keyword id="KW-0460">Magnesium</keyword>
<keyword id="KW-0479">Metal-binding</keyword>
<keyword id="KW-1185">Reference proteome</keyword>